<reference key="1">
    <citation type="journal article" date="2022" name="Biomolecules">
        <title>First Anti-Inflammatory Peptide AnmTX Sco 9a-1 from the Swimming Sea Anemone Stomphia coccinea.</title>
        <authorList>
            <person name="Kalina R.S."/>
            <person name="Gladkikh I.N."/>
            <person name="Klimovich A.A."/>
            <person name="Kozhevnikova Y.V."/>
            <person name="Kvetkina A.N."/>
            <person name="Rogozhin E.A."/>
            <person name="Koshelev S.G."/>
            <person name="Kozlov S.A."/>
            <person name="Leychenko E.V."/>
        </authorList>
    </citation>
    <scope>PROTEIN SEQUENCE</scope>
    <scope>FUNCTION</scope>
    <scope>MASS SPECTROMETRY</scope>
    <scope>DISULFIDE BOND</scope>
    <scope>HYDROXYLATION AT PRO-6</scope>
</reference>
<comment type="function">
    <text evidence="2">Has analgesic and anti-inflammatory activity in vivo (PubMed:36421718). At a dose of 0.1 and 1 mg/kg, exhibits anti-inflammatory activity by reducing the volume of edema during 24 h better than the nonsteroidal anti-inflammatory drug, Diclofenac, at dose of 1 mg/kg in a mouse model of acute local lambda-carrageenan-induced inflammation (PubMed:36421718). At a dose of 1 mg/kg, reduces the content of tumor necrosis factor-alpha (TNF-alpha) (PubMed:36421718). Demonstrates a significant analgesic effect on acute pain sensitivity in the carrageenan-induced thermal hyperalgesia model at doses of 0.1 and 1 mg/kg (PubMed:36421718). Not toxic in mice, however stimulates exploratory motivation and active search behavior, and demonstrates an anti-anxiety effect (PubMed:36421718). Does not exhibit any effect on currents of rat acid-sensing ion channels ASIC1a or ASIC3 (PubMed:36421718).</text>
</comment>
<comment type="mass spectrometry" mass="2960.2" method="Electrospray" evidence="2"/>
<comment type="similarity">
    <text evidence="4">Belongs to the sea anemone BBH family.</text>
</comment>
<feature type="chain" id="PRO_0000457872" description="AnmTX Sco 9a-1">
    <location>
        <begin position="1" status="less than"/>
        <end position="27" status="greater than"/>
    </location>
</feature>
<feature type="modified residue" description="Hydroxyproline" evidence="2">
    <location>
        <position position="6"/>
    </location>
</feature>
<feature type="disulfide bond" evidence="1">
    <location>
        <begin position="7"/>
        <end position="18"/>
    </location>
</feature>
<feature type="disulfide bond" evidence="3">
    <location>
        <begin position="10"/>
        <end position="25"/>
    </location>
</feature>
<feature type="non-terminal residue" evidence="4">
    <location>
        <position position="1"/>
    </location>
</feature>
<feature type="non-terminal residue" evidence="4">
    <location>
        <position position="27"/>
    </location>
</feature>
<organism>
    <name type="scientific">Stomphia coccinea</name>
    <name type="common">Spotted swimming anemone</name>
    <name type="synonym">Actinia coccinea</name>
    <dbReference type="NCBI Taxonomy" id="1929765"/>
    <lineage>
        <taxon>Eukaryota</taxon>
        <taxon>Metazoa</taxon>
        <taxon>Cnidaria</taxon>
        <taxon>Anthozoa</taxon>
        <taxon>Hexacorallia</taxon>
        <taxon>Actiniaria</taxon>
        <taxon>Nynantheae</taxon>
        <taxon>Actinostolidae</taxon>
        <taxon>Stomphia</taxon>
    </lineage>
</organism>
<accession>C0HM64</accession>
<evidence type="ECO:0000250" key="1">
    <source>
        <dbReference type="UniProtKB" id="R4ZCU1"/>
    </source>
</evidence>
<evidence type="ECO:0000269" key="2">
    <source>
    </source>
</evidence>
<evidence type="ECO:0000303" key="3">
    <source>
    </source>
</evidence>
<evidence type="ECO:0000305" key="4"/>
<keyword id="KW-0903">Direct protein sequencing</keyword>
<keyword id="KW-1015">Disulfide bond</keyword>
<keyword id="KW-0379">Hydroxylation</keyword>
<sequence length="27" mass="2948">NVLVPPCSGCYSQSGNTCYYDVYKCPS</sequence>
<protein>
    <recommendedName>
        <fullName evidence="3">AnmTX Sco 9a-1</fullName>
    </recommendedName>
</protein>
<name>BBH9A_STOCO</name>
<proteinExistence type="evidence at protein level"/>